<gene>
    <name type="ordered locus">SAS0363</name>
</gene>
<reference key="1">
    <citation type="journal article" date="2004" name="Proc. Natl. Acad. Sci. U.S.A.">
        <title>Complete genomes of two clinical Staphylococcus aureus strains: evidence for the rapid evolution of virulence and drug resistance.</title>
        <authorList>
            <person name="Holden M.T.G."/>
            <person name="Feil E.J."/>
            <person name="Lindsay J.A."/>
            <person name="Peacock S.J."/>
            <person name="Day N.P.J."/>
            <person name="Enright M.C."/>
            <person name="Foster T.J."/>
            <person name="Moore C.E."/>
            <person name="Hurst L."/>
            <person name="Atkin R."/>
            <person name="Barron A."/>
            <person name="Bason N."/>
            <person name="Bentley S.D."/>
            <person name="Chillingworth C."/>
            <person name="Chillingworth T."/>
            <person name="Churcher C."/>
            <person name="Clark L."/>
            <person name="Corton C."/>
            <person name="Cronin A."/>
            <person name="Doggett J."/>
            <person name="Dowd L."/>
            <person name="Feltwell T."/>
            <person name="Hance Z."/>
            <person name="Harris B."/>
            <person name="Hauser H."/>
            <person name="Holroyd S."/>
            <person name="Jagels K."/>
            <person name="James K.D."/>
            <person name="Lennard N."/>
            <person name="Line A."/>
            <person name="Mayes R."/>
            <person name="Moule S."/>
            <person name="Mungall K."/>
            <person name="Ormond D."/>
            <person name="Quail M.A."/>
            <person name="Rabbinowitsch E."/>
            <person name="Rutherford K.M."/>
            <person name="Sanders M."/>
            <person name="Sharp S."/>
            <person name="Simmonds M."/>
            <person name="Stevens K."/>
            <person name="Whitehead S."/>
            <person name="Barrell B.G."/>
            <person name="Spratt B.G."/>
            <person name="Parkhill J."/>
        </authorList>
    </citation>
    <scope>NUCLEOTIDE SEQUENCE [LARGE SCALE GENOMIC DNA]</scope>
    <source>
        <strain>MSSA476</strain>
    </source>
</reference>
<proteinExistence type="inferred from homology"/>
<organism>
    <name type="scientific">Staphylococcus aureus (strain MSSA476)</name>
    <dbReference type="NCBI Taxonomy" id="282459"/>
    <lineage>
        <taxon>Bacteria</taxon>
        <taxon>Bacillati</taxon>
        <taxon>Bacillota</taxon>
        <taxon>Bacilli</taxon>
        <taxon>Bacillales</taxon>
        <taxon>Staphylococcaceae</taxon>
        <taxon>Staphylococcus</taxon>
    </lineage>
</organism>
<name>UP355_STAAS</name>
<protein>
    <recommendedName>
        <fullName>UPF0355 protein SAS0363</fullName>
    </recommendedName>
</protein>
<evidence type="ECO:0000305" key="1"/>
<dbReference type="EMBL" id="BX571857">
    <property type="protein sequence ID" value="CAG42135.1"/>
    <property type="molecule type" value="Genomic_DNA"/>
</dbReference>
<dbReference type="RefSeq" id="WP_000763768.1">
    <property type="nucleotide sequence ID" value="NC_002953.3"/>
</dbReference>
<dbReference type="KEGG" id="sas:SAS0363"/>
<dbReference type="HOGENOM" id="CLU_152601_0_0_9"/>
<dbReference type="InterPro" id="IPR025889">
    <property type="entry name" value="GSP17M-like_dom"/>
</dbReference>
<dbReference type="Pfam" id="PF11181">
    <property type="entry name" value="YflT"/>
    <property type="match status" value="1"/>
</dbReference>
<accession>Q6GC85</accession>
<sequence>MADITVVNDTGELYNVINQKKSEGYLESELTIISKSKLHLNDLHDSEISLISTSGTFSDRMTKLLTGEDGEHAVLSRYNLAPDELEKYKQLILDDKMLVVAVRDKSSHQEVHENNSAYEEIDITHFAEASKGPKA</sequence>
<feature type="chain" id="PRO_0000220346" description="UPF0355 protein SAS0363">
    <location>
        <begin position="1"/>
        <end position="135"/>
    </location>
</feature>
<comment type="similarity">
    <text evidence="1">Belongs to the UPF0355 family.</text>
</comment>